<proteinExistence type="inferred from homology"/>
<comment type="function">
    <text evidence="1 2 7">Lactamase-like protein; part of the gene cluster that mediates the biosynthesis of neosartoricin B, a prenylated anthracenone that probably exhibits T-cell antiproliferative activity, suggestive of a physiological role as an immunosuppressive agent (PubMed:23758576). The non-reducing polyketide synthase nscA probably synthesizes and cyclizes the decaketide backbone (By similarity). The hydrolase nscB then mediates the product release through hydrolysis followed by spontaneous decarboxylation (By similarity). The prenyltransferase nscD catalyzes the addition of the dimethylallyl group to the aromatic C5 (By similarity). The FAD-dependent monooxygenase nscC is then responsible for the stereospecific hydroxylation at C2 (By similarity). Neosartoricin B can be converted into two additional compounds neosartoricins C and D (By similarity). Neosartoricin C is a spirocyclic compound that is cyclized through the attack of C3 hydroxyl on C14, followed by dehydration (By similarity). On the other hand, neosartoricin D is a further cyclized compound in which attack of C2 on C14 in neosartoricin C results in the formation of the acetal-containing dioxabicyclo-octanone ring (By similarity). Both of these compounds are novel and possibly represent related metabolites of the gene cluster (By similarity).</text>
</comment>
<comment type="cofactor">
    <cofactor evidence="3">
        <name>Zn(2+)</name>
        <dbReference type="ChEBI" id="CHEBI:29105"/>
    </cofactor>
    <text evidence="3">Binds 2 Zn(2+) ions per subunit.</text>
</comment>
<comment type="pathway">
    <text evidence="7">Secondary metabolite biosynthesis.</text>
</comment>
<comment type="similarity">
    <text evidence="6">Belongs to the metallo-beta-lactamase superfamily.</text>
</comment>
<name>NSCB_ARTBC</name>
<protein>
    <recommendedName>
        <fullName evidence="5">Lactamase-like protein nscB</fullName>
        <ecNumber evidence="7">3.1.-.-</ecNumber>
    </recommendedName>
    <alternativeName>
        <fullName evidence="5">Neosartoricin B biosynthesis protein B</fullName>
    </alternativeName>
</protein>
<dbReference type="EC" id="3.1.-.-" evidence="7"/>
<dbReference type="EMBL" id="ABSU01000014">
    <property type="protein sequence ID" value="EFE32710.1"/>
    <property type="molecule type" value="Genomic_DNA"/>
</dbReference>
<dbReference type="RefSeq" id="XP_003013350.1">
    <property type="nucleotide sequence ID" value="XM_003013304.1"/>
</dbReference>
<dbReference type="SMR" id="D4AWH0"/>
<dbReference type="STRING" id="663331.D4AWH0"/>
<dbReference type="GeneID" id="9519385"/>
<dbReference type="KEGG" id="abe:ARB_00535"/>
<dbReference type="eggNOG" id="KOG0813">
    <property type="taxonomic scope" value="Eukaryota"/>
</dbReference>
<dbReference type="HOGENOM" id="CLU_048478_1_0_1"/>
<dbReference type="OMA" id="PAKLIVW"/>
<dbReference type="Proteomes" id="UP000008866">
    <property type="component" value="Unassembled WGS sequence"/>
</dbReference>
<dbReference type="GO" id="GO:0016787">
    <property type="term" value="F:hydrolase activity"/>
    <property type="evidence" value="ECO:0007669"/>
    <property type="project" value="UniProtKB-KW"/>
</dbReference>
<dbReference type="GO" id="GO:0046872">
    <property type="term" value="F:metal ion binding"/>
    <property type="evidence" value="ECO:0007669"/>
    <property type="project" value="UniProtKB-KW"/>
</dbReference>
<dbReference type="GO" id="GO:0044550">
    <property type="term" value="P:secondary metabolite biosynthetic process"/>
    <property type="evidence" value="ECO:0007669"/>
    <property type="project" value="TreeGrafter"/>
</dbReference>
<dbReference type="CDD" id="cd07722">
    <property type="entry name" value="LACTB2-like_MBL-fold"/>
    <property type="match status" value="1"/>
</dbReference>
<dbReference type="FunFam" id="3.60.15.10:FF:000041">
    <property type="entry name" value="Metallo-beta-lactamase domain protein"/>
    <property type="match status" value="1"/>
</dbReference>
<dbReference type="Gene3D" id="3.60.15.10">
    <property type="entry name" value="Ribonuclease Z/Hydroxyacylglutathione hydrolase-like"/>
    <property type="match status" value="1"/>
</dbReference>
<dbReference type="Gene3D" id="1.10.10.10">
    <property type="entry name" value="Winged helix-like DNA-binding domain superfamily/Winged helix DNA-binding domain"/>
    <property type="match status" value="1"/>
</dbReference>
<dbReference type="InterPro" id="IPR047921">
    <property type="entry name" value="LACTB2-like_MBL-fold"/>
</dbReference>
<dbReference type="InterPro" id="IPR001279">
    <property type="entry name" value="Metallo-B-lactamas"/>
</dbReference>
<dbReference type="InterPro" id="IPR036866">
    <property type="entry name" value="RibonucZ/Hydroxyglut_hydro"/>
</dbReference>
<dbReference type="InterPro" id="IPR050662">
    <property type="entry name" value="Sec-metab_biosynth-thioest"/>
</dbReference>
<dbReference type="InterPro" id="IPR036388">
    <property type="entry name" value="WH-like_DNA-bd_sf"/>
</dbReference>
<dbReference type="PANTHER" id="PTHR23131">
    <property type="entry name" value="ENDORIBONUCLEASE LACTB2"/>
    <property type="match status" value="1"/>
</dbReference>
<dbReference type="PANTHER" id="PTHR23131:SF2">
    <property type="entry name" value="LACTAMASE-LIKE PROTEIN APTB-RELATED"/>
    <property type="match status" value="1"/>
</dbReference>
<dbReference type="Pfam" id="PF00753">
    <property type="entry name" value="Lactamase_B"/>
    <property type="match status" value="1"/>
</dbReference>
<dbReference type="SMART" id="SM00849">
    <property type="entry name" value="Lactamase_B"/>
    <property type="match status" value="1"/>
</dbReference>
<dbReference type="SUPFAM" id="SSF56281">
    <property type="entry name" value="Metallo-hydrolase/oxidoreductase"/>
    <property type="match status" value="1"/>
</dbReference>
<dbReference type="PROSITE" id="PS00743">
    <property type="entry name" value="BETA_LACTAMASE_B_1"/>
    <property type="match status" value="1"/>
</dbReference>
<reference key="1">
    <citation type="journal article" date="2011" name="Genome Biol.">
        <title>Comparative and functional genomics provide insights into the pathogenicity of dermatophytic fungi.</title>
        <authorList>
            <person name="Burmester A."/>
            <person name="Shelest E."/>
            <person name="Gloeckner G."/>
            <person name="Heddergott C."/>
            <person name="Schindler S."/>
            <person name="Staib P."/>
            <person name="Heidel A."/>
            <person name="Felder M."/>
            <person name="Petzold A."/>
            <person name="Szafranski K."/>
            <person name="Feuermann M."/>
            <person name="Pedruzzi I."/>
            <person name="Priebe S."/>
            <person name="Groth M."/>
            <person name="Winkler R."/>
            <person name="Li W."/>
            <person name="Kniemeyer O."/>
            <person name="Schroeckh V."/>
            <person name="Hertweck C."/>
            <person name="Hube B."/>
            <person name="White T.C."/>
            <person name="Platzer M."/>
            <person name="Guthke R."/>
            <person name="Heitman J."/>
            <person name="Woestemeyer J."/>
            <person name="Zipfel P.F."/>
            <person name="Monod M."/>
            <person name="Brakhage A.A."/>
        </authorList>
    </citation>
    <scope>NUCLEOTIDE SEQUENCE [LARGE SCALE GENOMIC DNA]</scope>
    <source>
        <strain>ATCC MYA-4681 / CBS 112371</strain>
    </source>
</reference>
<reference key="2">
    <citation type="journal article" date="2013" name="ACS Synth. Biol.">
        <title>Discovery of cryptic polyketide metabolites from dermatophytes using heterologous expression in Aspergillus nidulans.</title>
        <authorList>
            <person name="Yin W.B."/>
            <person name="Chooi Y.H."/>
            <person name="Smith A.R."/>
            <person name="Cacho R.A."/>
            <person name="Hu Y."/>
            <person name="White T.C."/>
            <person name="Tang Y."/>
        </authorList>
    </citation>
    <scope>FUNCTION</scope>
</reference>
<sequence length="439" mass="49014">MKSRVYVRFDRGFHVICPYQAKLAGSRKNDGAGYISPLALKSPIGLQHDLEDGCRIRSAFGKCIVNSRFLALIDVRKSGFKERGSKEPHGNSFVYWVTYSFLQFFETTMDELPSGRGMGGRLPFNQSFWEEFLSGREGQLPTLPDISHVSKSVIRILGGNPGSMHLQGTNTYLVGTGRSRILIDTAQGLPVWIDCISSFLHTQKIELSYVLLTHWHGDHTGGVPDLIAQNSSLADKIYKNHPDSGQNPITHGQIFSVDGATVRAIFTPGHSVDHMCFLLEEENALFTGDNVLGHGFSVAQDLGRYMDSLRDMASLGCRIGYPAHGAVIENLPGKLEEYIQHREGRERMMLSALTRQRVRGEGLREEGVKCGLTLNEIVMAIYGKLPPEVIEKALAPSLLQVLWKLTEDRMVGFKPGDPLKRQWFALEQRKRNKARGYPS</sequence>
<gene>
    <name evidence="5" type="primary">nscB</name>
    <name type="ORF">ARB_00535</name>
</gene>
<evidence type="ECO:0000250" key="1">
    <source>
        <dbReference type="UniProtKB" id="A1D8J2"/>
    </source>
</evidence>
<evidence type="ECO:0000250" key="2">
    <source>
        <dbReference type="UniProtKB" id="F2S702"/>
    </source>
</evidence>
<evidence type="ECO:0000250" key="3">
    <source>
        <dbReference type="UniProtKB" id="Q988B9"/>
    </source>
</evidence>
<evidence type="ECO:0000255" key="4"/>
<evidence type="ECO:0000303" key="5">
    <source>
    </source>
</evidence>
<evidence type="ECO:0000305" key="6"/>
<evidence type="ECO:0000305" key="7">
    <source>
    </source>
</evidence>
<feature type="chain" id="PRO_0000437901" description="Lactamase-like protein nscB">
    <location>
        <begin position="1"/>
        <end position="439"/>
    </location>
</feature>
<feature type="active site" description="Proton donor/acceptor" evidence="4">
    <location>
        <position position="218"/>
    </location>
</feature>
<feature type="binding site" evidence="3">
    <location>
        <position position="214"/>
    </location>
    <ligand>
        <name>Zn(2+)</name>
        <dbReference type="ChEBI" id="CHEBI:29105"/>
        <label>1</label>
        <note>catalytic</note>
    </ligand>
</feature>
<feature type="binding site" evidence="3">
    <location>
        <position position="216"/>
    </location>
    <ligand>
        <name>Zn(2+)</name>
        <dbReference type="ChEBI" id="CHEBI:29105"/>
        <label>1</label>
        <note>catalytic</note>
    </ligand>
</feature>
<feature type="binding site" evidence="3">
    <location>
        <position position="218"/>
    </location>
    <ligand>
        <name>Zn(2+)</name>
        <dbReference type="ChEBI" id="CHEBI:29105"/>
        <label>2</label>
        <note>catalytic</note>
    </ligand>
</feature>
<feature type="binding site" evidence="3">
    <location>
        <position position="219"/>
    </location>
    <ligand>
        <name>Zn(2+)</name>
        <dbReference type="ChEBI" id="CHEBI:29105"/>
        <label>2</label>
        <note>catalytic</note>
    </ligand>
</feature>
<organism>
    <name type="scientific">Arthroderma benhamiae (strain ATCC MYA-4681 / CBS 112371)</name>
    <name type="common">Trichophyton mentagrophytes</name>
    <dbReference type="NCBI Taxonomy" id="663331"/>
    <lineage>
        <taxon>Eukaryota</taxon>
        <taxon>Fungi</taxon>
        <taxon>Dikarya</taxon>
        <taxon>Ascomycota</taxon>
        <taxon>Pezizomycotina</taxon>
        <taxon>Eurotiomycetes</taxon>
        <taxon>Eurotiomycetidae</taxon>
        <taxon>Onygenales</taxon>
        <taxon>Arthrodermataceae</taxon>
        <taxon>Trichophyton</taxon>
    </lineage>
</organism>
<accession>D4AWH0</accession>
<keyword id="KW-0378">Hydrolase</keyword>
<keyword id="KW-0479">Metal-binding</keyword>
<keyword id="KW-1185">Reference proteome</keyword>
<keyword id="KW-0862">Zinc</keyword>